<protein>
    <recommendedName>
        <fullName>Common pilus major fimbrillin subunit EcpA</fullName>
    </recommendedName>
    <alternativeName>
        <fullName>MatB fimbrillin</fullName>
    </alternativeName>
</protein>
<dbReference type="EMBL" id="CP000468">
    <property type="protein sequence ID" value="ABI99765.1"/>
    <property type="molecule type" value="Genomic_DNA"/>
</dbReference>
<dbReference type="RefSeq" id="WP_000730982.1">
    <property type="nucleotide sequence ID" value="NZ_CADILS010000092.1"/>
</dbReference>
<dbReference type="SMR" id="A1A7X6"/>
<dbReference type="KEGG" id="ecv:APECO1_1704"/>
<dbReference type="HOGENOM" id="CLU_120328_0_0_6"/>
<dbReference type="Proteomes" id="UP000008216">
    <property type="component" value="Chromosome"/>
</dbReference>
<dbReference type="GO" id="GO:0009289">
    <property type="term" value="C:pilus"/>
    <property type="evidence" value="ECO:0007669"/>
    <property type="project" value="UniProtKB-SubCell"/>
</dbReference>
<dbReference type="Gene3D" id="2.60.40.3290">
    <property type="entry name" value="Fimbrial protein EcpA"/>
    <property type="match status" value="1"/>
</dbReference>
<dbReference type="InterPro" id="IPR016514">
    <property type="entry name" value="EcpA"/>
</dbReference>
<dbReference type="InterPro" id="IPR038478">
    <property type="entry name" value="Fimbrillin_EcpA_sf"/>
</dbReference>
<dbReference type="Pfam" id="PF16449">
    <property type="entry name" value="MatB"/>
    <property type="match status" value="1"/>
</dbReference>
<dbReference type="PIRSF" id="PIRSF007320">
    <property type="entry name" value="Fimbrillin_MatB"/>
    <property type="match status" value="1"/>
</dbReference>
<accession>A1A7X6</accession>
<gene>
    <name type="primary">ecpA</name>
    <name type="synonym">matB</name>
    <name type="ordered locus">Ecok1_02720</name>
    <name type="ORF">APECO1_1704</name>
</gene>
<name>ECPA_ECOK1</name>
<reference key="1">
    <citation type="journal article" date="2007" name="J. Bacteriol.">
        <title>The genome sequence of avian pathogenic Escherichia coli strain O1:K1:H7 shares strong similarities with human extraintestinal pathogenic E. coli genomes.</title>
        <authorList>
            <person name="Johnson T.J."/>
            <person name="Kariyawasam S."/>
            <person name="Wannemuehler Y."/>
            <person name="Mangiamele P."/>
            <person name="Johnson S.J."/>
            <person name="Doetkott C."/>
            <person name="Skyberg J.A."/>
            <person name="Lynne A.M."/>
            <person name="Johnson J.R."/>
            <person name="Nolan L.K."/>
        </authorList>
    </citation>
    <scope>NUCLEOTIDE SEQUENCE [LARGE SCALE GENOMIC DNA]</scope>
</reference>
<proteinExistence type="inferred from homology"/>
<evidence type="ECO:0000250" key="1"/>
<evidence type="ECO:0000255" key="2"/>
<evidence type="ECO:0000305" key="3"/>
<keyword id="KW-0281">Fimbrium</keyword>
<keyword id="KW-1185">Reference proteome</keyword>
<keyword id="KW-0732">Signal</keyword>
<feature type="signal peptide" evidence="2">
    <location>
        <begin position="1"/>
        <end position="22"/>
    </location>
</feature>
<feature type="chain" id="PRO_0000367928" description="Common pilus major fimbrillin subunit EcpA">
    <location>
        <begin position="23"/>
        <end position="195"/>
    </location>
</feature>
<sequence>MKKKVLAIALVTVFTGTGVAQAADVTAQAVATWSATAKKDTTSKLVVTPLGSLAFQYAEGIKGFNSQKGLFDVAIEGDSTATAFKLTSRLITNTLTQLDTSGSTLNVGVDYNGAAVEKTGDTVMIDTANGVLGGNLSPLANGYNASNRTTAQDGFTFSIISGTTNGTTAVTDYSTLPEGIWSGDVSVQFDATWTS</sequence>
<organism>
    <name type="scientific">Escherichia coli O1:K1 / APEC</name>
    <dbReference type="NCBI Taxonomy" id="405955"/>
    <lineage>
        <taxon>Bacteria</taxon>
        <taxon>Pseudomonadati</taxon>
        <taxon>Pseudomonadota</taxon>
        <taxon>Gammaproteobacteria</taxon>
        <taxon>Enterobacterales</taxon>
        <taxon>Enterobacteriaceae</taxon>
        <taxon>Escherichia</taxon>
    </lineage>
</organism>
<comment type="function">
    <text evidence="1">Part of the ecpRABCDE operon, which encodes the E.coli common pilus (ECP). ECP is found in both commensal and pathogenic strains and plays a dual role in early-stage biofilm development and host cell recognition. Major subunit of the fimbria (By similarity).</text>
</comment>
<comment type="subunit">
    <text evidence="1">Self-associates. Forms filaments. Interacts with EcpD (By similarity).</text>
</comment>
<comment type="subcellular location">
    <subcellularLocation>
        <location evidence="1">Fimbrium</location>
    </subcellularLocation>
</comment>
<comment type="induction">
    <text evidence="1">Negatively regulated by H-NS. Positively regulated by IHF and EcpR (By similarity).</text>
</comment>
<comment type="similarity">
    <text evidence="3">Belongs to the EcpA/MatB fimbrillin family.</text>
</comment>